<gene>
    <name evidence="1" type="primary">arc</name>
    <name type="ordered locus">BIF_01286</name>
</gene>
<feature type="chain" id="PRO_0000396965" description="AAA ATPase forming ring-shaped complexes">
    <location>
        <begin position="1"/>
        <end position="524"/>
    </location>
</feature>
<feature type="region of interest" description="Disordered" evidence="2">
    <location>
        <begin position="1"/>
        <end position="29"/>
    </location>
</feature>
<feature type="coiled-coil region" evidence="1">
    <location>
        <begin position="22"/>
        <end position="59"/>
    </location>
</feature>
<feature type="binding site" evidence="1">
    <location>
        <begin position="250"/>
        <end position="255"/>
    </location>
    <ligand>
        <name>ATP</name>
        <dbReference type="ChEBI" id="CHEBI:30616"/>
    </ligand>
</feature>
<protein>
    <recommendedName>
        <fullName evidence="1">AAA ATPase forming ring-shaped complexes</fullName>
        <shortName evidence="1">ARC</shortName>
    </recommendedName>
</protein>
<organism>
    <name type="scientific">Bifidobacterium animalis subsp. lactis (strain BB-12)</name>
    <dbReference type="NCBI Taxonomy" id="552531"/>
    <lineage>
        <taxon>Bacteria</taxon>
        <taxon>Bacillati</taxon>
        <taxon>Actinomycetota</taxon>
        <taxon>Actinomycetes</taxon>
        <taxon>Bifidobacteriales</taxon>
        <taxon>Bifidobacteriaceae</taxon>
        <taxon>Bifidobacterium</taxon>
    </lineage>
</organism>
<sequence length="524" mass="57095">MGMGQEKHTDAASQSRDPEAVAAHENDQLRQRNHALAKALTRATEELRKAKAQLEQFMAPPLTMATMVRVHRCSTDEHGVRHASAEILNGNRRQIVPLSPTVNPAQLGSGQGVLLDANMVIVDSCETPTTGPMRAVSESLADGRLIVSDVGGNRGVVMRASAVARTPINVDDRVVIDPSGTYVLSVLPQEQAQDLLLEETPDVSFTDIGGLDEQIARIRDAVQLPFQHRDLFDRFDLKAPKGVLLYGPPGNGKTLIAKAIAHELAAGSGNDGVFLSVKGPELLNKFVGESERLIRRIFERAKELSGAGRPVIVFIDEMDSLLRTRGTGVSSDVETTIVPQFLTELDGVESLDDVMVIGASNRIDMIDPAVLRPGRLDVKIHVTRPDETAAMAITRHYLTDALPLEPGRDADALAASLVRDLFRRDESRLLATLDEQGRRRGIYMADIVSGAMLRNIVDRAKTKAVKAEILHGSVSRDDEPQGITEARIHEAIDDEYEQNRSTINETDPGQWLRINALTLAADGV</sequence>
<name>ARC_BIFAB</name>
<evidence type="ECO:0000255" key="1">
    <source>
        <dbReference type="HAMAP-Rule" id="MF_02112"/>
    </source>
</evidence>
<evidence type="ECO:0000256" key="2">
    <source>
        <dbReference type="SAM" id="MobiDB-lite"/>
    </source>
</evidence>
<accession>D3R4I7</accession>
<proteinExistence type="inferred from homology"/>
<comment type="subunit">
    <text evidence="1">Homohexamer. Assembles into a hexameric ring structure.</text>
</comment>
<comment type="similarity">
    <text evidence="1">Belongs to the AAA ATPase family.</text>
</comment>
<reference key="1">
    <citation type="journal article" date="2010" name="J. Bacteriol.">
        <title>Complete genome sequence of Bifidobacterium animalis subsp. lactis BB-12, a widely consumed probiotic strain.</title>
        <authorList>
            <person name="Garrigues C."/>
            <person name="Johansen E."/>
            <person name="Pedersen M.B."/>
        </authorList>
    </citation>
    <scope>NUCLEOTIDE SEQUENCE [LARGE SCALE GENOMIC DNA]</scope>
    <source>
        <strain>BB-12</strain>
    </source>
</reference>
<dbReference type="EMBL" id="CP001853">
    <property type="protein sequence ID" value="ADC85661.1"/>
    <property type="molecule type" value="Genomic_DNA"/>
</dbReference>
<dbReference type="SMR" id="D3R4I7"/>
<dbReference type="KEGG" id="bbb:BIF_01286"/>
<dbReference type="PATRIC" id="fig|552531.3.peg.1127"/>
<dbReference type="eggNOG" id="COG1222">
    <property type="taxonomic scope" value="Bacteria"/>
</dbReference>
<dbReference type="HOGENOM" id="CLU_036054_0_0_11"/>
<dbReference type="GO" id="GO:0000502">
    <property type="term" value="C:proteasome complex"/>
    <property type="evidence" value="ECO:0007669"/>
    <property type="project" value="InterPro"/>
</dbReference>
<dbReference type="GO" id="GO:0005524">
    <property type="term" value="F:ATP binding"/>
    <property type="evidence" value="ECO:0007669"/>
    <property type="project" value="UniProtKB-UniRule"/>
</dbReference>
<dbReference type="GO" id="GO:0016887">
    <property type="term" value="F:ATP hydrolysis activity"/>
    <property type="evidence" value="ECO:0007669"/>
    <property type="project" value="UniProtKB-UniRule"/>
</dbReference>
<dbReference type="GO" id="GO:0019941">
    <property type="term" value="P:modification-dependent protein catabolic process"/>
    <property type="evidence" value="ECO:0007669"/>
    <property type="project" value="InterPro"/>
</dbReference>
<dbReference type="GO" id="GO:0010498">
    <property type="term" value="P:proteasomal protein catabolic process"/>
    <property type="evidence" value="ECO:0007669"/>
    <property type="project" value="InterPro"/>
</dbReference>
<dbReference type="FunFam" id="3.40.50.300:FF:001025">
    <property type="entry name" value="ATPase family, AAA domain-containing 2B"/>
    <property type="match status" value="1"/>
</dbReference>
<dbReference type="Gene3D" id="1.10.8.60">
    <property type="match status" value="1"/>
</dbReference>
<dbReference type="Gene3D" id="2.40.50.140">
    <property type="entry name" value="Nucleic acid-binding proteins"/>
    <property type="match status" value="1"/>
</dbReference>
<dbReference type="Gene3D" id="3.40.50.300">
    <property type="entry name" value="P-loop containing nucleotide triphosphate hydrolases"/>
    <property type="match status" value="1"/>
</dbReference>
<dbReference type="HAMAP" id="MF_02112">
    <property type="entry name" value="ARC_ATPase"/>
    <property type="match status" value="1"/>
</dbReference>
<dbReference type="InterPro" id="IPR003593">
    <property type="entry name" value="AAA+_ATPase"/>
</dbReference>
<dbReference type="InterPro" id="IPR050168">
    <property type="entry name" value="AAA_ATPase_domain"/>
</dbReference>
<dbReference type="InterPro" id="IPR003959">
    <property type="entry name" value="ATPase_AAA_core"/>
</dbReference>
<dbReference type="InterPro" id="IPR003960">
    <property type="entry name" value="ATPase_AAA_CS"/>
</dbReference>
<dbReference type="InterPro" id="IPR012340">
    <property type="entry name" value="NA-bd_OB-fold"/>
</dbReference>
<dbReference type="InterPro" id="IPR027417">
    <property type="entry name" value="P-loop_NTPase"/>
</dbReference>
<dbReference type="InterPro" id="IPR032501">
    <property type="entry name" value="Prot_ATP_ID_OB_2nd"/>
</dbReference>
<dbReference type="InterPro" id="IPR041626">
    <property type="entry name" value="Prot_ATP_ID_OB_N"/>
</dbReference>
<dbReference type="InterPro" id="IPR022482">
    <property type="entry name" value="Proteasome_ATPase"/>
</dbReference>
<dbReference type="NCBIfam" id="TIGR03689">
    <property type="entry name" value="pup_AAA"/>
    <property type="match status" value="1"/>
</dbReference>
<dbReference type="PANTHER" id="PTHR23077">
    <property type="entry name" value="AAA-FAMILY ATPASE"/>
    <property type="match status" value="1"/>
</dbReference>
<dbReference type="PANTHER" id="PTHR23077:SF144">
    <property type="entry name" value="PROTEASOME-ASSOCIATED ATPASE"/>
    <property type="match status" value="1"/>
</dbReference>
<dbReference type="Pfam" id="PF00004">
    <property type="entry name" value="AAA"/>
    <property type="match status" value="1"/>
</dbReference>
<dbReference type="Pfam" id="PF16450">
    <property type="entry name" value="Prot_ATP_ID_OB_C"/>
    <property type="match status" value="1"/>
</dbReference>
<dbReference type="Pfam" id="PF17758">
    <property type="entry name" value="Prot_ATP_ID_OB_N"/>
    <property type="match status" value="1"/>
</dbReference>
<dbReference type="SMART" id="SM00382">
    <property type="entry name" value="AAA"/>
    <property type="match status" value="1"/>
</dbReference>
<dbReference type="SUPFAM" id="SSF52540">
    <property type="entry name" value="P-loop containing nucleoside triphosphate hydrolases"/>
    <property type="match status" value="1"/>
</dbReference>
<dbReference type="PROSITE" id="PS00674">
    <property type="entry name" value="AAA"/>
    <property type="match status" value="1"/>
</dbReference>
<keyword id="KW-0067">ATP-binding</keyword>
<keyword id="KW-0175">Coiled coil</keyword>
<keyword id="KW-0547">Nucleotide-binding</keyword>